<organism>
    <name type="scientific">Arabidopsis thaliana</name>
    <name type="common">Mouse-ear cress</name>
    <dbReference type="NCBI Taxonomy" id="3702"/>
    <lineage>
        <taxon>Eukaryota</taxon>
        <taxon>Viridiplantae</taxon>
        <taxon>Streptophyta</taxon>
        <taxon>Embryophyta</taxon>
        <taxon>Tracheophyta</taxon>
        <taxon>Spermatophyta</taxon>
        <taxon>Magnoliopsida</taxon>
        <taxon>eudicotyledons</taxon>
        <taxon>Gunneridae</taxon>
        <taxon>Pentapetalae</taxon>
        <taxon>rosids</taxon>
        <taxon>malvids</taxon>
        <taxon>Brassicales</taxon>
        <taxon>Brassicaceae</taxon>
        <taxon>Camelineae</taxon>
        <taxon>Arabidopsis</taxon>
    </lineage>
</organism>
<gene>
    <name evidence="4 6" type="primary">VPS45</name>
    <name evidence="5" type="synonym">BEN2</name>
    <name evidence="8" type="ordered locus">At1g77140</name>
    <name evidence="9" type="ORF">T14N5.2</name>
</gene>
<accession>O49048</accession>
<accession>O80650</accession>
<protein>
    <recommendedName>
        <fullName evidence="4 6">Vacuolar protein sorting-associated protein 45 homolog</fullName>
        <shortName evidence="4 6">AtVPS45</shortName>
    </recommendedName>
    <alternativeName>
        <fullName evidence="5">Protein BFA-VISUALIZED ENDOCYTIC TRAFFICKING DEFECTIVE 2</fullName>
    </alternativeName>
</protein>
<keyword id="KW-0927">Auxin signaling pathway</keyword>
<keyword id="KW-0967">Endosome</keyword>
<keyword id="KW-0333">Golgi apparatus</keyword>
<keyword id="KW-0472">Membrane</keyword>
<keyword id="KW-0653">Protein transport</keyword>
<keyword id="KW-1185">Reference proteome</keyword>
<keyword id="KW-0813">Transport</keyword>
<proteinExistence type="evidence at protein level"/>
<reference key="1">
    <citation type="journal article" date="1998" name="Plant Physiol.">
        <title>An Arabidopsis VPS45p homolog implicated in protein transport to the vacuole.</title>
        <authorList>
            <person name="Bassham D.C."/>
            <person name="Raikhel N.V."/>
        </authorList>
    </citation>
    <scope>NUCLEOTIDE SEQUENCE [MRNA]</scope>
    <source>
        <strain>cv. Columbia</strain>
    </source>
</reference>
<reference key="2">
    <citation type="journal article" date="2000" name="Nature">
        <title>Sequence and analysis of chromosome 1 of the plant Arabidopsis thaliana.</title>
        <authorList>
            <person name="Theologis A."/>
            <person name="Ecker J.R."/>
            <person name="Palm C.J."/>
            <person name="Federspiel N.A."/>
            <person name="Kaul S."/>
            <person name="White O."/>
            <person name="Alonso J."/>
            <person name="Altafi H."/>
            <person name="Araujo R."/>
            <person name="Bowman C.L."/>
            <person name="Brooks S.Y."/>
            <person name="Buehler E."/>
            <person name="Chan A."/>
            <person name="Chao Q."/>
            <person name="Chen H."/>
            <person name="Cheuk R.F."/>
            <person name="Chin C.W."/>
            <person name="Chung M.K."/>
            <person name="Conn L."/>
            <person name="Conway A.B."/>
            <person name="Conway A.R."/>
            <person name="Creasy T.H."/>
            <person name="Dewar K."/>
            <person name="Dunn P."/>
            <person name="Etgu P."/>
            <person name="Feldblyum T.V."/>
            <person name="Feng J.-D."/>
            <person name="Fong B."/>
            <person name="Fujii C.Y."/>
            <person name="Gill J.E."/>
            <person name="Goldsmith A.D."/>
            <person name="Haas B."/>
            <person name="Hansen N.F."/>
            <person name="Hughes B."/>
            <person name="Huizar L."/>
            <person name="Hunter J.L."/>
            <person name="Jenkins J."/>
            <person name="Johnson-Hopson C."/>
            <person name="Khan S."/>
            <person name="Khaykin E."/>
            <person name="Kim C.J."/>
            <person name="Koo H.L."/>
            <person name="Kremenetskaia I."/>
            <person name="Kurtz D.B."/>
            <person name="Kwan A."/>
            <person name="Lam B."/>
            <person name="Langin-Hooper S."/>
            <person name="Lee A."/>
            <person name="Lee J.M."/>
            <person name="Lenz C.A."/>
            <person name="Li J.H."/>
            <person name="Li Y.-P."/>
            <person name="Lin X."/>
            <person name="Liu S.X."/>
            <person name="Liu Z.A."/>
            <person name="Luros J.S."/>
            <person name="Maiti R."/>
            <person name="Marziali A."/>
            <person name="Militscher J."/>
            <person name="Miranda M."/>
            <person name="Nguyen M."/>
            <person name="Nierman W.C."/>
            <person name="Osborne B.I."/>
            <person name="Pai G."/>
            <person name="Peterson J."/>
            <person name="Pham P.K."/>
            <person name="Rizzo M."/>
            <person name="Rooney T."/>
            <person name="Rowley D."/>
            <person name="Sakano H."/>
            <person name="Salzberg S.L."/>
            <person name="Schwartz J.R."/>
            <person name="Shinn P."/>
            <person name="Southwick A.M."/>
            <person name="Sun H."/>
            <person name="Tallon L.J."/>
            <person name="Tambunga G."/>
            <person name="Toriumi M.J."/>
            <person name="Town C.D."/>
            <person name="Utterback T."/>
            <person name="Van Aken S."/>
            <person name="Vaysberg M."/>
            <person name="Vysotskaia V.S."/>
            <person name="Walker M."/>
            <person name="Wu D."/>
            <person name="Yu G."/>
            <person name="Fraser C.M."/>
            <person name="Venter J.C."/>
            <person name="Davis R.W."/>
        </authorList>
    </citation>
    <scope>NUCLEOTIDE SEQUENCE [LARGE SCALE GENOMIC DNA]</scope>
    <source>
        <strain>cv. Columbia</strain>
    </source>
</reference>
<reference key="3">
    <citation type="journal article" date="2017" name="Plant J.">
        <title>Araport11: a complete reannotation of the Arabidopsis thaliana reference genome.</title>
        <authorList>
            <person name="Cheng C.Y."/>
            <person name="Krishnakumar V."/>
            <person name="Chan A.P."/>
            <person name="Thibaud-Nissen F."/>
            <person name="Schobel S."/>
            <person name="Town C.D."/>
        </authorList>
    </citation>
    <scope>GENOME REANNOTATION</scope>
    <source>
        <strain>cv. Columbia</strain>
    </source>
</reference>
<reference key="4">
    <citation type="journal article" date="2003" name="Science">
        <title>Empirical analysis of transcriptional activity in the Arabidopsis genome.</title>
        <authorList>
            <person name="Yamada K."/>
            <person name="Lim J."/>
            <person name="Dale J.M."/>
            <person name="Chen H."/>
            <person name="Shinn P."/>
            <person name="Palm C.J."/>
            <person name="Southwick A.M."/>
            <person name="Wu H.C."/>
            <person name="Kim C.J."/>
            <person name="Nguyen M."/>
            <person name="Pham P.K."/>
            <person name="Cheuk R.F."/>
            <person name="Karlin-Newmann G."/>
            <person name="Liu S.X."/>
            <person name="Lam B."/>
            <person name="Sakano H."/>
            <person name="Wu T."/>
            <person name="Yu G."/>
            <person name="Miranda M."/>
            <person name="Quach H.L."/>
            <person name="Tripp M."/>
            <person name="Chang C.H."/>
            <person name="Lee J.M."/>
            <person name="Toriumi M.J."/>
            <person name="Chan M.M."/>
            <person name="Tang C.C."/>
            <person name="Onodera C.S."/>
            <person name="Deng J.M."/>
            <person name="Akiyama K."/>
            <person name="Ansari Y."/>
            <person name="Arakawa T."/>
            <person name="Banh J."/>
            <person name="Banno F."/>
            <person name="Bowser L."/>
            <person name="Brooks S.Y."/>
            <person name="Carninci P."/>
            <person name="Chao Q."/>
            <person name="Choy N."/>
            <person name="Enju A."/>
            <person name="Goldsmith A.D."/>
            <person name="Gurjal M."/>
            <person name="Hansen N.F."/>
            <person name="Hayashizaki Y."/>
            <person name="Johnson-Hopson C."/>
            <person name="Hsuan V.W."/>
            <person name="Iida K."/>
            <person name="Karnes M."/>
            <person name="Khan S."/>
            <person name="Koesema E."/>
            <person name="Ishida J."/>
            <person name="Jiang P.X."/>
            <person name="Jones T."/>
            <person name="Kawai J."/>
            <person name="Kamiya A."/>
            <person name="Meyers C."/>
            <person name="Nakajima M."/>
            <person name="Narusaka M."/>
            <person name="Seki M."/>
            <person name="Sakurai T."/>
            <person name="Satou M."/>
            <person name="Tamse R."/>
            <person name="Vaysberg M."/>
            <person name="Wallender E.K."/>
            <person name="Wong C."/>
            <person name="Yamamura Y."/>
            <person name="Yuan S."/>
            <person name="Shinozaki K."/>
            <person name="Davis R.W."/>
            <person name="Theologis A."/>
            <person name="Ecker J.R."/>
        </authorList>
    </citation>
    <scope>NUCLEOTIDE SEQUENCE [LARGE SCALE MRNA]</scope>
    <source>
        <strain>cv. Columbia</strain>
    </source>
</reference>
<reference key="5">
    <citation type="journal article" date="2000" name="Mol. Biol. Cell">
        <title>AtVPS45 complex formation at the trans-Golgi network.</title>
        <authorList>
            <person name="Bassham D.C."/>
            <person name="Sanderfoot A.A."/>
            <person name="Kovaleva V."/>
            <person name="Zheng H."/>
            <person name="Raikhel N.V."/>
        </authorList>
    </citation>
    <scope>INTERACTION WITH SYP21; SYP22; SYP31; SYP41; SYP42; SYP61; VTI11 AND VTI12</scope>
    <scope>SUBCELLULAR LOCATION</scope>
</reference>
<reference key="6">
    <citation type="journal article" date="2009" name="Plant Physiol.">
        <title>AtVPS45 is a positive regulator of the SYP41/SYP61/VTI12 SNARE complex involved in trafficking of vacuolar cargo.</title>
        <authorList>
            <person name="Zouhar J."/>
            <person name="Rojo E."/>
            <person name="Bassham D.C."/>
        </authorList>
    </citation>
    <scope>FUNCTION</scope>
    <scope>SUBUNIT</scope>
    <scope>DISRUPTION PHENOTYPE</scope>
    <source>
        <strain>cv. Columbia</strain>
    </source>
</reference>
<reference key="7">
    <citation type="journal article" date="2013" name="PLoS Genet.">
        <title>Cell polarity and patterning by PIN trafficking through early endosomal compartments in Arabidopsis thaliana.</title>
        <authorList>
            <person name="Tanaka H."/>
            <person name="Kitakura S."/>
            <person name="Rakusova H."/>
            <person name="Uemura T."/>
            <person name="Feraru M.I."/>
            <person name="De Rycke R."/>
            <person name="Robert S."/>
            <person name="Kakimoto T."/>
            <person name="Friml J."/>
        </authorList>
    </citation>
    <scope>FUNCTION</scope>
    <scope>MUTAGENESIS OF ASP-129</scope>
    <scope>SUBCELLULAR LOCATION</scope>
    <source>
        <strain>cv. Columbia</strain>
    </source>
</reference>
<evidence type="ECO:0000269" key="1">
    <source>
    </source>
</evidence>
<evidence type="ECO:0000269" key="2">
    <source>
    </source>
</evidence>
<evidence type="ECO:0000269" key="3">
    <source>
    </source>
</evidence>
<evidence type="ECO:0000303" key="4">
    <source>
    </source>
</evidence>
<evidence type="ECO:0000303" key="5">
    <source>
    </source>
</evidence>
<evidence type="ECO:0000303" key="6">
    <source>
    </source>
</evidence>
<evidence type="ECO:0000305" key="7"/>
<evidence type="ECO:0000312" key="8">
    <source>
        <dbReference type="Araport" id="AT1G77140"/>
    </source>
</evidence>
<evidence type="ECO:0000312" key="9">
    <source>
        <dbReference type="EMBL" id="AAC34344.1"/>
    </source>
</evidence>
<dbReference type="EMBL" id="AF036234">
    <property type="protein sequence ID" value="AAC39472.1"/>
    <property type="molecule type" value="mRNA"/>
</dbReference>
<dbReference type="EMBL" id="AC004260">
    <property type="protein sequence ID" value="AAC34344.1"/>
    <property type="molecule type" value="Genomic_DNA"/>
</dbReference>
<dbReference type="EMBL" id="CP002684">
    <property type="protein sequence ID" value="AEE35940.1"/>
    <property type="molecule type" value="Genomic_DNA"/>
</dbReference>
<dbReference type="EMBL" id="AY050370">
    <property type="protein sequence ID" value="AAK91388.1"/>
    <property type="molecule type" value="mRNA"/>
</dbReference>
<dbReference type="EMBL" id="AY101517">
    <property type="protein sequence ID" value="AAM26638.1"/>
    <property type="molecule type" value="mRNA"/>
</dbReference>
<dbReference type="PIR" id="T00445">
    <property type="entry name" value="T00445"/>
</dbReference>
<dbReference type="PIR" id="T52056">
    <property type="entry name" value="T52056"/>
</dbReference>
<dbReference type="RefSeq" id="NP_565150.1">
    <property type="nucleotide sequence ID" value="NM_106364.2"/>
</dbReference>
<dbReference type="SMR" id="O49048"/>
<dbReference type="BioGRID" id="29269">
    <property type="interactions" value="5"/>
</dbReference>
<dbReference type="FunCoup" id="O49048">
    <property type="interactions" value="4667"/>
</dbReference>
<dbReference type="IntAct" id="O49048">
    <property type="interactions" value="5"/>
</dbReference>
<dbReference type="STRING" id="3702.O49048"/>
<dbReference type="iPTMnet" id="O49048"/>
<dbReference type="PaxDb" id="3702-AT1G77140.1"/>
<dbReference type="ProteomicsDB" id="242739"/>
<dbReference type="DNASU" id="844050"/>
<dbReference type="EnsemblPlants" id="AT1G77140.1">
    <property type="protein sequence ID" value="AT1G77140.1"/>
    <property type="gene ID" value="AT1G77140"/>
</dbReference>
<dbReference type="GeneID" id="844050"/>
<dbReference type="Gramene" id="AT1G77140.1">
    <property type="protein sequence ID" value="AT1G77140.1"/>
    <property type="gene ID" value="AT1G77140"/>
</dbReference>
<dbReference type="KEGG" id="ath:AT1G77140"/>
<dbReference type="Araport" id="AT1G77140"/>
<dbReference type="TAIR" id="AT1G77140">
    <property type="gene designation" value="VPS45"/>
</dbReference>
<dbReference type="eggNOG" id="KOG1299">
    <property type="taxonomic scope" value="Eukaryota"/>
</dbReference>
<dbReference type="HOGENOM" id="CLU_013933_3_1_1"/>
<dbReference type="InParanoid" id="O49048"/>
<dbReference type="OMA" id="VHQLNNA"/>
<dbReference type="OrthoDB" id="10266265at2759"/>
<dbReference type="PhylomeDB" id="O49048"/>
<dbReference type="PRO" id="PR:O49048"/>
<dbReference type="Proteomes" id="UP000006548">
    <property type="component" value="Chromosome 1"/>
</dbReference>
<dbReference type="ExpressionAtlas" id="O49048">
    <property type="expression patterns" value="baseline and differential"/>
</dbReference>
<dbReference type="GO" id="GO:0005769">
    <property type="term" value="C:early endosome"/>
    <property type="evidence" value="ECO:0000314"/>
    <property type="project" value="UniProtKB"/>
</dbReference>
<dbReference type="GO" id="GO:0005739">
    <property type="term" value="C:mitochondrion"/>
    <property type="evidence" value="ECO:0007005"/>
    <property type="project" value="TAIR"/>
</dbReference>
<dbReference type="GO" id="GO:0009705">
    <property type="term" value="C:plant-type vacuole membrane"/>
    <property type="evidence" value="ECO:0000314"/>
    <property type="project" value="TAIR"/>
</dbReference>
<dbReference type="GO" id="GO:0031201">
    <property type="term" value="C:SNARE complex"/>
    <property type="evidence" value="ECO:0000314"/>
    <property type="project" value="UniProtKB"/>
</dbReference>
<dbReference type="GO" id="GO:0005802">
    <property type="term" value="C:trans-Golgi network"/>
    <property type="evidence" value="ECO:0000314"/>
    <property type="project" value="TAIR"/>
</dbReference>
<dbReference type="GO" id="GO:0009734">
    <property type="term" value="P:auxin-activated signaling pathway"/>
    <property type="evidence" value="ECO:0007669"/>
    <property type="project" value="UniProtKB-KW"/>
</dbReference>
<dbReference type="GO" id="GO:0006886">
    <property type="term" value="P:intracellular protein transport"/>
    <property type="evidence" value="ECO:0000315"/>
    <property type="project" value="UniProtKB"/>
</dbReference>
<dbReference type="GO" id="GO:0009846">
    <property type="term" value="P:pollen germination"/>
    <property type="evidence" value="ECO:0000315"/>
    <property type="project" value="UniProtKB"/>
</dbReference>
<dbReference type="GO" id="GO:0030307">
    <property type="term" value="P:positive regulation of cell growth"/>
    <property type="evidence" value="ECO:0000315"/>
    <property type="project" value="UniProtKB"/>
</dbReference>
<dbReference type="GO" id="GO:2000012">
    <property type="term" value="P:regulation of auxin polar transport"/>
    <property type="evidence" value="ECO:0000315"/>
    <property type="project" value="UniProtKB"/>
</dbReference>
<dbReference type="GO" id="GO:2000067">
    <property type="term" value="P:regulation of root morphogenesis"/>
    <property type="evidence" value="ECO:0000315"/>
    <property type="project" value="UniProtKB"/>
</dbReference>
<dbReference type="GO" id="GO:0031338">
    <property type="term" value="P:regulation of vesicle fusion"/>
    <property type="evidence" value="ECO:0000315"/>
    <property type="project" value="UniProtKB"/>
</dbReference>
<dbReference type="GO" id="GO:0016192">
    <property type="term" value="P:vesicle-mediated transport"/>
    <property type="evidence" value="ECO:0000315"/>
    <property type="project" value="UniProtKB"/>
</dbReference>
<dbReference type="FunFam" id="1.25.40.60:FF:000005">
    <property type="entry name" value="Vacuolar protein sorting-associated protein 45 homolog"/>
    <property type="match status" value="1"/>
</dbReference>
<dbReference type="FunFam" id="3.40.50.2060:FF:000007">
    <property type="entry name" value="Vacuolar sorting protein"/>
    <property type="match status" value="1"/>
</dbReference>
<dbReference type="Gene3D" id="1.25.40.60">
    <property type="match status" value="1"/>
</dbReference>
<dbReference type="Gene3D" id="3.40.50.1910">
    <property type="match status" value="1"/>
</dbReference>
<dbReference type="Gene3D" id="3.40.50.2060">
    <property type="match status" value="1"/>
</dbReference>
<dbReference type="Gene3D" id="3.90.830.10">
    <property type="entry name" value="Syntaxin Binding Protein 1, Chain A, domain 2"/>
    <property type="match status" value="1"/>
</dbReference>
<dbReference type="InterPro" id="IPR043154">
    <property type="entry name" value="Sec-1-like_dom1"/>
</dbReference>
<dbReference type="InterPro" id="IPR043127">
    <property type="entry name" value="Sec-1-like_dom3a"/>
</dbReference>
<dbReference type="InterPro" id="IPR001619">
    <property type="entry name" value="Sec1-like"/>
</dbReference>
<dbReference type="InterPro" id="IPR027482">
    <property type="entry name" value="Sec1-like_dom2"/>
</dbReference>
<dbReference type="InterPro" id="IPR036045">
    <property type="entry name" value="Sec1-like_sf"/>
</dbReference>
<dbReference type="PANTHER" id="PTHR11679">
    <property type="entry name" value="VESICLE PROTEIN SORTING-ASSOCIATED"/>
    <property type="match status" value="1"/>
</dbReference>
<dbReference type="Pfam" id="PF00995">
    <property type="entry name" value="Sec1"/>
    <property type="match status" value="1"/>
</dbReference>
<dbReference type="PIRSF" id="PIRSF005715">
    <property type="entry name" value="VPS45_Sec1"/>
    <property type="match status" value="1"/>
</dbReference>
<dbReference type="SUPFAM" id="SSF56815">
    <property type="entry name" value="Sec1/munc18-like (SM) proteins"/>
    <property type="match status" value="1"/>
</dbReference>
<sequence>MVLVTSVRDYINRMLQDISGMKVLILDSETVSNVSIVYSQSELLQKEVFLVEMIDSISVSKESMSHLKAVYFIRPTSDNIQKLRYQLANPRFGEYHLFFSNLLKDTQIHILADSDEQEVVQQVQEYYADFVSGDPYHFTLNMASNHLYMIPAVVDPSGLQRFSDRVVDGIAAVFLALKRRPVIRYQRTSDTAKRIAHETAKLMYQHESALFDFRRTESSPLLLVIDRRDDPVTPLLNQWTYQAMVHELIGLQDNKVDLKSIGSLPKDQQVEVVLSSEQDAFFKSNMYENFGDIGMNIKRMVDDFQQVAKSNQNIQTVEDMARFVDNYPEYKKMQGNVSKHVTLVTEMSKLVEARKLMTVSQTEQDLACNGGQGAAYEAVTDLLNNESVSDIDRLRLVMLYALRYEKENPVQLMQLFNKLASRSPKYKPGLVQFLLKQAGVEKRTGDLFGNRDLLNIARNMARGLKGVENVYTQHQPLLFQTMESITRGRLRDVDYPFVGDHFQQGRPQEVVIFMVGGTTYEESRSVALQNATNSGVRFILGGTAVLNSKRFLKDLEEAQRISRSGSHMV</sequence>
<comment type="function">
    <text evidence="2 3">Involved in the protein transport to the vacuole, probably at the level of vesicle fusion at the trans-Golgi network (TGN) and not in transport from the TGN to the prevacuolar compartment, by promoting the recycling of vacuolar sorting receptors back to the TGN (PubMed:19251905). Involved in early endosomal vesicle trafficking, particularly at the trans-Golgi-network/early endosome (TGN/EE) thus residing in early endocytic route (PubMed:23737757). Together with BIG5/BEN1 required for polar PIN-FORMED (PIN) proteins localization, for their dynamic repolarization, and consequently for auxin activity gradient formation and auxin-related developmental processes (e.g. embryonic patterning, organogenesis and vasculature venation patterning) (PubMed:23737757). Necessary for pollen germination and for cell expansion (PubMed:19251905). Binds syntaxins.</text>
</comment>
<comment type="subunit">
    <text evidence="1 2">Interacts with both SYP41 or SYP42 and VTI12, but in different domains of the trans-Golgi network (PubMed:10888666). Does not interact on the pervacuolar compartment with VTI11, SYP21 or SYP22, or on the cis-Golgi with SYP31 (PubMed:10888666). Interacts at the trans-Golgi network (TGN) with the SYP41/SYP61/VTI12 SNARE complex (PubMed:19251905).</text>
</comment>
<comment type="interaction">
    <interactant intactId="EBI-1750377">
        <id>O49048</id>
    </interactant>
    <interactant intactId="EBI-1750331">
        <id>O65359</id>
        <label>SYP41</label>
    </interactant>
    <organismsDiffer>false</organismsDiffer>
    <experiments>6</experiments>
</comment>
<comment type="interaction">
    <interactant intactId="EBI-1750377">
        <id>O49048</id>
    </interactant>
    <interactant intactId="EBI-1750405">
        <id>Q9SWH4</id>
        <label>SYP42</label>
    </interactant>
    <organismsDiffer>false</organismsDiffer>
    <experiments>4</experiments>
</comment>
<comment type="subcellular location">
    <subcellularLocation>
        <location evidence="1">Golgi apparatus</location>
        <location evidence="1">trans-Golgi network membrane</location>
        <topology evidence="1">Peripheral membrane protein</topology>
    </subcellularLocation>
    <subcellularLocation>
        <location evidence="3">Early endosome</location>
    </subcellularLocation>
    <text evidence="1">Binds to trans-Golgi network membranes through interaction with other proteins.</text>
</comment>
<comment type="tissue specificity">
    <text>Highly expressed in roots, lower expression in leaves, stems and flowers.</text>
</comment>
<comment type="disruption phenotype">
    <text evidence="2">Male gametophytic lethal and stunted growth associated with defects in vacuole formation leading to reduced cell expansion and autophagy-related defects in nutrient turnover (PubMed:19251905). Blocked transport of vacuolar cargo proteins with C-terminal vacuolar sorting determinants (PubMed:19251905).</text>
</comment>
<comment type="similarity">
    <text evidence="7">Belongs to the STXBP/unc-18/SEC1 family.</text>
</comment>
<feature type="chain" id="PRO_0000206315" description="Vacuolar protein sorting-associated protein 45 homolog">
    <location>
        <begin position="1"/>
        <end position="569"/>
    </location>
</feature>
<feature type="mutagenesis site" description="In ben2; abnormal subcellular localization with impaired association with the trans-Golgi-network and early endosome (TGN/EE). Reduced accumulation of endocytosed proteins (e.g. PIN2) in agglomerated intracellular endosomal compartments leading to an altered auxin gradient and subsequent growth defects (e.g. disrupted roots architecture and shoot growth)." evidence="3">
    <original>D</original>
    <variation>N</variation>
    <location>
        <position position="129"/>
    </location>
</feature>
<feature type="sequence conflict" description="In Ref. 1; AAC39472." evidence="7" ref="1">
    <original>T</original>
    <variation>I</variation>
    <location>
        <position position="362"/>
    </location>
</feature>
<name>VPS45_ARATH</name>